<proteinExistence type="inferred from homology"/>
<evidence type="ECO:0000255" key="1">
    <source>
        <dbReference type="HAMAP-Rule" id="MF_00607"/>
    </source>
</evidence>
<dbReference type="EC" id="2.1.1.182" evidence="1"/>
<dbReference type="EMBL" id="AE017223">
    <property type="protein sequence ID" value="AAX74076.1"/>
    <property type="molecule type" value="Genomic_DNA"/>
</dbReference>
<dbReference type="RefSeq" id="WP_011265330.1">
    <property type="nucleotide sequence ID" value="NC_006932.1"/>
</dbReference>
<dbReference type="SMR" id="Q57E58"/>
<dbReference type="EnsemblBacteria" id="AAX74076">
    <property type="protein sequence ID" value="AAX74076"/>
    <property type="gene ID" value="BruAb1_0701"/>
</dbReference>
<dbReference type="KEGG" id="bmb:BruAb1_0701"/>
<dbReference type="HOGENOM" id="CLU_041220_0_1_5"/>
<dbReference type="Proteomes" id="UP000000540">
    <property type="component" value="Chromosome I"/>
</dbReference>
<dbReference type="GO" id="GO:0005829">
    <property type="term" value="C:cytosol"/>
    <property type="evidence" value="ECO:0007669"/>
    <property type="project" value="TreeGrafter"/>
</dbReference>
<dbReference type="GO" id="GO:0052908">
    <property type="term" value="F:16S rRNA (adenine(1518)-N(6)/adenine(1519)-N(6))-dimethyltransferase activity"/>
    <property type="evidence" value="ECO:0007669"/>
    <property type="project" value="UniProtKB-EC"/>
</dbReference>
<dbReference type="GO" id="GO:0003723">
    <property type="term" value="F:RNA binding"/>
    <property type="evidence" value="ECO:0007669"/>
    <property type="project" value="UniProtKB-KW"/>
</dbReference>
<dbReference type="CDD" id="cd02440">
    <property type="entry name" value="AdoMet_MTases"/>
    <property type="match status" value="1"/>
</dbReference>
<dbReference type="FunFam" id="1.10.8.100:FF:000001">
    <property type="entry name" value="Ribosomal RNA small subunit methyltransferase A"/>
    <property type="match status" value="1"/>
</dbReference>
<dbReference type="Gene3D" id="1.10.8.100">
    <property type="entry name" value="Ribosomal RNA adenine dimethylase-like, domain 2"/>
    <property type="match status" value="1"/>
</dbReference>
<dbReference type="Gene3D" id="3.40.50.150">
    <property type="entry name" value="Vaccinia Virus protein VP39"/>
    <property type="match status" value="1"/>
</dbReference>
<dbReference type="HAMAP" id="MF_00607">
    <property type="entry name" value="16SrRNA_methyltr_A"/>
    <property type="match status" value="1"/>
</dbReference>
<dbReference type="InterPro" id="IPR001737">
    <property type="entry name" value="KsgA/Erm"/>
</dbReference>
<dbReference type="InterPro" id="IPR023165">
    <property type="entry name" value="rRNA_Ade_diMease-like_C"/>
</dbReference>
<dbReference type="InterPro" id="IPR020596">
    <property type="entry name" value="rRNA_Ade_Mease_Trfase_CS"/>
</dbReference>
<dbReference type="InterPro" id="IPR020598">
    <property type="entry name" value="rRNA_Ade_methylase_Trfase_N"/>
</dbReference>
<dbReference type="InterPro" id="IPR011530">
    <property type="entry name" value="rRNA_adenine_dimethylase"/>
</dbReference>
<dbReference type="InterPro" id="IPR029063">
    <property type="entry name" value="SAM-dependent_MTases_sf"/>
</dbReference>
<dbReference type="NCBIfam" id="TIGR00755">
    <property type="entry name" value="ksgA"/>
    <property type="match status" value="1"/>
</dbReference>
<dbReference type="PANTHER" id="PTHR11727">
    <property type="entry name" value="DIMETHYLADENOSINE TRANSFERASE"/>
    <property type="match status" value="1"/>
</dbReference>
<dbReference type="PANTHER" id="PTHR11727:SF7">
    <property type="entry name" value="DIMETHYLADENOSINE TRANSFERASE-RELATED"/>
    <property type="match status" value="1"/>
</dbReference>
<dbReference type="Pfam" id="PF00398">
    <property type="entry name" value="RrnaAD"/>
    <property type="match status" value="1"/>
</dbReference>
<dbReference type="SMART" id="SM00650">
    <property type="entry name" value="rADc"/>
    <property type="match status" value="1"/>
</dbReference>
<dbReference type="SUPFAM" id="SSF53335">
    <property type="entry name" value="S-adenosyl-L-methionine-dependent methyltransferases"/>
    <property type="match status" value="1"/>
</dbReference>
<dbReference type="PROSITE" id="PS01131">
    <property type="entry name" value="RRNA_A_DIMETH"/>
    <property type="match status" value="1"/>
</dbReference>
<dbReference type="PROSITE" id="PS51689">
    <property type="entry name" value="SAM_RNA_A_N6_MT"/>
    <property type="match status" value="1"/>
</dbReference>
<reference key="1">
    <citation type="journal article" date="2005" name="J. Bacteriol.">
        <title>Completion of the genome sequence of Brucella abortus and comparison to the highly similar genomes of Brucella melitensis and Brucella suis.</title>
        <authorList>
            <person name="Halling S.M."/>
            <person name="Peterson-Burch B.D."/>
            <person name="Bricker B.J."/>
            <person name="Zuerner R.L."/>
            <person name="Qing Z."/>
            <person name="Li L.-L."/>
            <person name="Kapur V."/>
            <person name="Alt D.P."/>
            <person name="Olsen S.C."/>
        </authorList>
    </citation>
    <scope>NUCLEOTIDE SEQUENCE [LARGE SCALE GENOMIC DNA]</scope>
    <source>
        <strain>9-941</strain>
    </source>
</reference>
<accession>Q57E58</accession>
<keyword id="KW-0963">Cytoplasm</keyword>
<keyword id="KW-0489">Methyltransferase</keyword>
<keyword id="KW-0694">RNA-binding</keyword>
<keyword id="KW-0698">rRNA processing</keyword>
<keyword id="KW-0949">S-adenosyl-L-methionine</keyword>
<keyword id="KW-0808">Transferase</keyword>
<feature type="chain" id="PRO_0000271905" description="Ribosomal RNA small subunit methyltransferase A">
    <location>
        <begin position="1"/>
        <end position="276"/>
    </location>
</feature>
<feature type="binding site" evidence="1">
    <location>
        <position position="27"/>
    </location>
    <ligand>
        <name>S-adenosyl-L-methionine</name>
        <dbReference type="ChEBI" id="CHEBI:59789"/>
    </ligand>
</feature>
<feature type="binding site" evidence="1">
    <location>
        <position position="29"/>
    </location>
    <ligand>
        <name>S-adenosyl-L-methionine</name>
        <dbReference type="ChEBI" id="CHEBI:59789"/>
    </ligand>
</feature>
<feature type="binding site" evidence="1">
    <location>
        <position position="54"/>
    </location>
    <ligand>
        <name>S-adenosyl-L-methionine</name>
        <dbReference type="ChEBI" id="CHEBI:59789"/>
    </ligand>
</feature>
<feature type="binding site" evidence="1">
    <location>
        <position position="75"/>
    </location>
    <ligand>
        <name>S-adenosyl-L-methionine</name>
        <dbReference type="ChEBI" id="CHEBI:59789"/>
    </ligand>
</feature>
<feature type="binding site" evidence="1">
    <location>
        <position position="101"/>
    </location>
    <ligand>
        <name>S-adenosyl-L-methionine</name>
        <dbReference type="ChEBI" id="CHEBI:59789"/>
    </ligand>
</feature>
<feature type="binding site" evidence="1">
    <location>
        <position position="122"/>
    </location>
    <ligand>
        <name>S-adenosyl-L-methionine</name>
        <dbReference type="ChEBI" id="CHEBI:59789"/>
    </ligand>
</feature>
<protein>
    <recommendedName>
        <fullName evidence="1">Ribosomal RNA small subunit methyltransferase A</fullName>
        <ecNumber evidence="1">2.1.1.182</ecNumber>
    </recommendedName>
    <alternativeName>
        <fullName evidence="1">16S rRNA (adenine(1518)-N(6)/adenine(1519)-N(6))-dimethyltransferase</fullName>
    </alternativeName>
    <alternativeName>
        <fullName evidence="1">16S rRNA dimethyladenosine transferase</fullName>
    </alternativeName>
    <alternativeName>
        <fullName evidence="1">16S rRNA dimethylase</fullName>
    </alternativeName>
    <alternativeName>
        <fullName evidence="1">S-adenosylmethionine-6-N', N'-adenosyl(rRNA) dimethyltransferase</fullName>
    </alternativeName>
</protein>
<organism>
    <name type="scientific">Brucella abortus biovar 1 (strain 9-941)</name>
    <dbReference type="NCBI Taxonomy" id="262698"/>
    <lineage>
        <taxon>Bacteria</taxon>
        <taxon>Pseudomonadati</taxon>
        <taxon>Pseudomonadota</taxon>
        <taxon>Alphaproteobacteria</taxon>
        <taxon>Hyphomicrobiales</taxon>
        <taxon>Brucellaceae</taxon>
        <taxon>Brucella/Ochrobactrum group</taxon>
        <taxon>Brucella</taxon>
    </lineage>
</organism>
<gene>
    <name evidence="1" type="primary">rsmA</name>
    <name evidence="1" type="synonym">ksgA</name>
    <name type="ordered locus">BruAb1_0701</name>
</gene>
<sequence length="276" mass="30336">MSIDSLPPLREVIERHDLMPKKSLGQNFLFDLNLTSKIARQAGDLRDQPVIEVGPGPGGLTRALLAQGAYVTAIERDDRCLEALAEIAAHYPGRLRIIAGDALEQDFTALFPEGPKPRIVANLPYNVGTQLLLNWLLVEPWPPFYSSMTLMFQREVAERIVAKPDSDHYGRLGVLAGWRTQAKIAFDVPPQAFTPPPKVMSSVVHIVPRETPLPCRAEALGQITQAAFGQRRKMLRQSLKSIGGAALLEKMGIDGTRRAETLSVEEFVALANACLP</sequence>
<name>RSMA_BRUAB</name>
<comment type="function">
    <text evidence="1">Specifically dimethylates two adjacent adenosines (A1518 and A1519) in the loop of a conserved hairpin near the 3'-end of 16S rRNA in the 30S particle. May play a critical role in biogenesis of 30S subunits.</text>
</comment>
<comment type="catalytic activity">
    <reaction evidence="1">
        <text>adenosine(1518)/adenosine(1519) in 16S rRNA + 4 S-adenosyl-L-methionine = N(6)-dimethyladenosine(1518)/N(6)-dimethyladenosine(1519) in 16S rRNA + 4 S-adenosyl-L-homocysteine + 4 H(+)</text>
        <dbReference type="Rhea" id="RHEA:19609"/>
        <dbReference type="Rhea" id="RHEA-COMP:10232"/>
        <dbReference type="Rhea" id="RHEA-COMP:10233"/>
        <dbReference type="ChEBI" id="CHEBI:15378"/>
        <dbReference type="ChEBI" id="CHEBI:57856"/>
        <dbReference type="ChEBI" id="CHEBI:59789"/>
        <dbReference type="ChEBI" id="CHEBI:74411"/>
        <dbReference type="ChEBI" id="CHEBI:74493"/>
        <dbReference type="EC" id="2.1.1.182"/>
    </reaction>
</comment>
<comment type="subcellular location">
    <subcellularLocation>
        <location evidence="1">Cytoplasm</location>
    </subcellularLocation>
</comment>
<comment type="similarity">
    <text evidence="1">Belongs to the class I-like SAM-binding methyltransferase superfamily. rRNA adenine N(6)-methyltransferase family. RsmA subfamily.</text>
</comment>